<name>PYRH_ANADE</name>
<accession>Q2IMM2</accession>
<evidence type="ECO:0000255" key="1">
    <source>
        <dbReference type="HAMAP-Rule" id="MF_01220"/>
    </source>
</evidence>
<sequence length="251" mass="27094">MASEKASNPKARYQRILLKLSGEALMGDGKYGISPKTLTSIAHDVKDVVDLGVEVALTIGGGNIFRGVSGATEGMDRSSADYMGMLATVINSMALQDALEKIGVPTRVQSAIEMHQVAEPYIRRRAIRHLEKGRVVIFAAGTGNPYFTTDTAASLRAMEIHADVLLKATKVDGVYTDDPKKNPAATKFKQLSYIDVLKKNLKVMDSTAISLCMDNDLPIVVFDLTQRGNVRKVVLGEEIGTTVGRPSARNA</sequence>
<dbReference type="EC" id="2.7.4.22" evidence="1"/>
<dbReference type="EMBL" id="CP000251">
    <property type="protein sequence ID" value="ABC80056.1"/>
    <property type="molecule type" value="Genomic_DNA"/>
</dbReference>
<dbReference type="RefSeq" id="WP_011419339.1">
    <property type="nucleotide sequence ID" value="NC_007760.1"/>
</dbReference>
<dbReference type="SMR" id="Q2IMM2"/>
<dbReference type="STRING" id="290397.Adeh_0280"/>
<dbReference type="KEGG" id="ade:Adeh_0280"/>
<dbReference type="eggNOG" id="COG0528">
    <property type="taxonomic scope" value="Bacteria"/>
</dbReference>
<dbReference type="HOGENOM" id="CLU_033861_0_0_7"/>
<dbReference type="OrthoDB" id="9807458at2"/>
<dbReference type="UniPathway" id="UPA00159">
    <property type="reaction ID" value="UER00275"/>
</dbReference>
<dbReference type="Proteomes" id="UP000001935">
    <property type="component" value="Chromosome"/>
</dbReference>
<dbReference type="GO" id="GO:0005737">
    <property type="term" value="C:cytoplasm"/>
    <property type="evidence" value="ECO:0007669"/>
    <property type="project" value="UniProtKB-SubCell"/>
</dbReference>
<dbReference type="GO" id="GO:0005524">
    <property type="term" value="F:ATP binding"/>
    <property type="evidence" value="ECO:0007669"/>
    <property type="project" value="UniProtKB-KW"/>
</dbReference>
<dbReference type="GO" id="GO:0033862">
    <property type="term" value="F:UMP kinase activity"/>
    <property type="evidence" value="ECO:0007669"/>
    <property type="project" value="UniProtKB-EC"/>
</dbReference>
<dbReference type="GO" id="GO:0044210">
    <property type="term" value="P:'de novo' CTP biosynthetic process"/>
    <property type="evidence" value="ECO:0007669"/>
    <property type="project" value="UniProtKB-UniRule"/>
</dbReference>
<dbReference type="GO" id="GO:0006225">
    <property type="term" value="P:UDP biosynthetic process"/>
    <property type="evidence" value="ECO:0007669"/>
    <property type="project" value="TreeGrafter"/>
</dbReference>
<dbReference type="CDD" id="cd04254">
    <property type="entry name" value="AAK_UMPK-PyrH-Ec"/>
    <property type="match status" value="1"/>
</dbReference>
<dbReference type="FunFam" id="3.40.1160.10:FF:000001">
    <property type="entry name" value="Uridylate kinase"/>
    <property type="match status" value="1"/>
</dbReference>
<dbReference type="Gene3D" id="3.40.1160.10">
    <property type="entry name" value="Acetylglutamate kinase-like"/>
    <property type="match status" value="1"/>
</dbReference>
<dbReference type="HAMAP" id="MF_01220_B">
    <property type="entry name" value="PyrH_B"/>
    <property type="match status" value="1"/>
</dbReference>
<dbReference type="InterPro" id="IPR036393">
    <property type="entry name" value="AceGlu_kinase-like_sf"/>
</dbReference>
<dbReference type="InterPro" id="IPR001048">
    <property type="entry name" value="Asp/Glu/Uridylate_kinase"/>
</dbReference>
<dbReference type="InterPro" id="IPR011817">
    <property type="entry name" value="Uridylate_kinase"/>
</dbReference>
<dbReference type="InterPro" id="IPR015963">
    <property type="entry name" value="Uridylate_kinase_bac"/>
</dbReference>
<dbReference type="NCBIfam" id="TIGR02075">
    <property type="entry name" value="pyrH_bact"/>
    <property type="match status" value="1"/>
</dbReference>
<dbReference type="PANTHER" id="PTHR42833">
    <property type="entry name" value="URIDYLATE KINASE"/>
    <property type="match status" value="1"/>
</dbReference>
<dbReference type="PANTHER" id="PTHR42833:SF4">
    <property type="entry name" value="URIDYLATE KINASE PUMPKIN, CHLOROPLASTIC"/>
    <property type="match status" value="1"/>
</dbReference>
<dbReference type="Pfam" id="PF00696">
    <property type="entry name" value="AA_kinase"/>
    <property type="match status" value="1"/>
</dbReference>
<dbReference type="PIRSF" id="PIRSF005650">
    <property type="entry name" value="Uridylate_kin"/>
    <property type="match status" value="1"/>
</dbReference>
<dbReference type="SUPFAM" id="SSF53633">
    <property type="entry name" value="Carbamate kinase-like"/>
    <property type="match status" value="1"/>
</dbReference>
<proteinExistence type="inferred from homology"/>
<keyword id="KW-0067">ATP-binding</keyword>
<keyword id="KW-0963">Cytoplasm</keyword>
<keyword id="KW-0418">Kinase</keyword>
<keyword id="KW-0547">Nucleotide-binding</keyword>
<keyword id="KW-0665">Pyrimidine biosynthesis</keyword>
<keyword id="KW-1185">Reference proteome</keyword>
<keyword id="KW-0808">Transferase</keyword>
<gene>
    <name evidence="1" type="primary">pyrH</name>
    <name type="ordered locus">Adeh_0280</name>
</gene>
<organism>
    <name type="scientific">Anaeromyxobacter dehalogenans (strain 2CP-C)</name>
    <dbReference type="NCBI Taxonomy" id="290397"/>
    <lineage>
        <taxon>Bacteria</taxon>
        <taxon>Pseudomonadati</taxon>
        <taxon>Myxococcota</taxon>
        <taxon>Myxococcia</taxon>
        <taxon>Myxococcales</taxon>
        <taxon>Cystobacterineae</taxon>
        <taxon>Anaeromyxobacteraceae</taxon>
        <taxon>Anaeromyxobacter</taxon>
    </lineage>
</organism>
<feature type="chain" id="PRO_0000323781" description="Uridylate kinase">
    <location>
        <begin position="1"/>
        <end position="251"/>
    </location>
</feature>
<feature type="binding site" evidence="1">
    <location>
        <begin position="19"/>
        <end position="22"/>
    </location>
    <ligand>
        <name>ATP</name>
        <dbReference type="ChEBI" id="CHEBI:30616"/>
    </ligand>
</feature>
<feature type="binding site" evidence="1">
    <location>
        <position position="61"/>
    </location>
    <ligand>
        <name>UMP</name>
        <dbReference type="ChEBI" id="CHEBI:57865"/>
    </ligand>
</feature>
<feature type="binding site" evidence="1">
    <location>
        <position position="62"/>
    </location>
    <ligand>
        <name>ATP</name>
        <dbReference type="ChEBI" id="CHEBI:30616"/>
    </ligand>
</feature>
<feature type="binding site" evidence="1">
    <location>
        <position position="66"/>
    </location>
    <ligand>
        <name>ATP</name>
        <dbReference type="ChEBI" id="CHEBI:30616"/>
    </ligand>
</feature>
<feature type="binding site" evidence="1">
    <location>
        <position position="81"/>
    </location>
    <ligand>
        <name>UMP</name>
        <dbReference type="ChEBI" id="CHEBI:57865"/>
    </ligand>
</feature>
<feature type="binding site" evidence="1">
    <location>
        <begin position="142"/>
        <end position="149"/>
    </location>
    <ligand>
        <name>UMP</name>
        <dbReference type="ChEBI" id="CHEBI:57865"/>
    </ligand>
</feature>
<feature type="binding site" evidence="1">
    <location>
        <position position="169"/>
    </location>
    <ligand>
        <name>ATP</name>
        <dbReference type="ChEBI" id="CHEBI:30616"/>
    </ligand>
</feature>
<feature type="binding site" evidence="1">
    <location>
        <position position="175"/>
    </location>
    <ligand>
        <name>ATP</name>
        <dbReference type="ChEBI" id="CHEBI:30616"/>
    </ligand>
</feature>
<feature type="binding site" evidence="1">
    <location>
        <position position="178"/>
    </location>
    <ligand>
        <name>ATP</name>
        <dbReference type="ChEBI" id="CHEBI:30616"/>
    </ligand>
</feature>
<protein>
    <recommendedName>
        <fullName evidence="1">Uridylate kinase</fullName>
        <shortName evidence="1">UK</shortName>
        <ecNumber evidence="1">2.7.4.22</ecNumber>
    </recommendedName>
    <alternativeName>
        <fullName evidence="1">Uridine monophosphate kinase</fullName>
        <shortName evidence="1">UMP kinase</shortName>
        <shortName evidence="1">UMPK</shortName>
    </alternativeName>
</protein>
<comment type="function">
    <text evidence="1">Catalyzes the reversible phosphorylation of UMP to UDP.</text>
</comment>
<comment type="catalytic activity">
    <reaction evidence="1">
        <text>UMP + ATP = UDP + ADP</text>
        <dbReference type="Rhea" id="RHEA:24400"/>
        <dbReference type="ChEBI" id="CHEBI:30616"/>
        <dbReference type="ChEBI" id="CHEBI:57865"/>
        <dbReference type="ChEBI" id="CHEBI:58223"/>
        <dbReference type="ChEBI" id="CHEBI:456216"/>
        <dbReference type="EC" id="2.7.4.22"/>
    </reaction>
</comment>
<comment type="activity regulation">
    <text evidence="1">Inhibited by UTP.</text>
</comment>
<comment type="pathway">
    <text evidence="1">Pyrimidine metabolism; CTP biosynthesis via de novo pathway; UDP from UMP (UMPK route): step 1/1.</text>
</comment>
<comment type="subunit">
    <text evidence="1">Homohexamer.</text>
</comment>
<comment type="subcellular location">
    <subcellularLocation>
        <location evidence="1">Cytoplasm</location>
    </subcellularLocation>
</comment>
<comment type="similarity">
    <text evidence="1">Belongs to the UMP kinase family.</text>
</comment>
<reference key="1">
    <citation type="submission" date="2006-01" db="EMBL/GenBank/DDBJ databases">
        <title>Complete sequence of Anaeromyxobacter dehalogenans 2CP-C.</title>
        <authorList>
            <person name="Copeland A."/>
            <person name="Lucas S."/>
            <person name="Lapidus A."/>
            <person name="Barry K."/>
            <person name="Detter J.C."/>
            <person name="Glavina T."/>
            <person name="Hammon N."/>
            <person name="Israni S."/>
            <person name="Pitluck S."/>
            <person name="Brettin T."/>
            <person name="Bruce D."/>
            <person name="Han C."/>
            <person name="Tapia R."/>
            <person name="Gilna P."/>
            <person name="Kiss H."/>
            <person name="Schmutz J."/>
            <person name="Larimer F."/>
            <person name="Land M."/>
            <person name="Kyrpides N."/>
            <person name="Anderson I."/>
            <person name="Sanford R.A."/>
            <person name="Ritalahti K.M."/>
            <person name="Thomas H.S."/>
            <person name="Kirby J.R."/>
            <person name="Zhulin I.B."/>
            <person name="Loeffler F.E."/>
            <person name="Richardson P."/>
        </authorList>
    </citation>
    <scope>NUCLEOTIDE SEQUENCE [LARGE SCALE GENOMIC DNA]</scope>
    <source>
        <strain>2CP-C</strain>
    </source>
</reference>